<name>G6PI_FUSNN</name>
<evidence type="ECO:0000255" key="1">
    <source>
        <dbReference type="HAMAP-Rule" id="MF_00473"/>
    </source>
</evidence>
<accession>Q8RHH5</accession>
<sequence length="448" mass="50509">MKKINLDYSKVFNFISQDELNQIKVSIDKVAEKLHNKSGAGNNFLGWLDLPINYDKEEFSRIKKASEKIKADSDVLIVIGIGGSYLGARAVIECLSHSFFNSLNKEKRNAPEIYFAGQNISGRYLKDLIEIIGDRDFSVNIISKSGTTTEPAIAFRVFKELLENKYGEKAKDRIYVTTDKNKGALKKLADEKGYEKFVIPDDVGGRFSVLTAVGLLPIAVAGINIDALMNGAQIAREDYSKDFADNDCYKYAAIRNILYKKNYNIEILANYEPKFHYISEWWKQLYGESEGKDKKGIFPASVDLTTDLHSMGQYIQDGRRNLMETILNVENSDKDIVIKKEVEDLDGLNYLEGKGLSFVNNKAFEGTLLAHIDGGVPNLVINIPEVTAFNIGYLIYFFEKACAISGYLLEVNPFDQPGVESYKKNMFALLGKKGYEELSKELNERLKK</sequence>
<dbReference type="EC" id="5.3.1.9" evidence="1"/>
<dbReference type="EMBL" id="AE009951">
    <property type="protein sequence ID" value="AAL94138.1"/>
    <property type="molecule type" value="Genomic_DNA"/>
</dbReference>
<dbReference type="RefSeq" id="NP_602839.1">
    <property type="nucleotide sequence ID" value="NC_003454.1"/>
</dbReference>
<dbReference type="RefSeq" id="WP_011016003.1">
    <property type="nucleotide sequence ID" value="NZ_CP028101.1"/>
</dbReference>
<dbReference type="SMR" id="Q8RHH5"/>
<dbReference type="FunCoup" id="Q8RHH5">
    <property type="interactions" value="309"/>
</dbReference>
<dbReference type="STRING" id="190304.FN2054"/>
<dbReference type="PaxDb" id="190304-FN2054"/>
<dbReference type="EnsemblBacteria" id="AAL94138">
    <property type="protein sequence ID" value="AAL94138"/>
    <property type="gene ID" value="FN2054"/>
</dbReference>
<dbReference type="GeneID" id="79782939"/>
<dbReference type="KEGG" id="fnu:FN2054"/>
<dbReference type="PATRIC" id="fig|190304.8.peg.516"/>
<dbReference type="eggNOG" id="COG0166">
    <property type="taxonomic scope" value="Bacteria"/>
</dbReference>
<dbReference type="HOGENOM" id="CLU_037303_0_1_0"/>
<dbReference type="InParanoid" id="Q8RHH5"/>
<dbReference type="BioCyc" id="FNUC190304:G1FZS-541-MONOMER"/>
<dbReference type="UniPathway" id="UPA00109">
    <property type="reaction ID" value="UER00181"/>
</dbReference>
<dbReference type="UniPathway" id="UPA00138"/>
<dbReference type="Proteomes" id="UP000002521">
    <property type="component" value="Chromosome"/>
</dbReference>
<dbReference type="GO" id="GO:0005829">
    <property type="term" value="C:cytosol"/>
    <property type="evidence" value="ECO:0000318"/>
    <property type="project" value="GO_Central"/>
</dbReference>
<dbReference type="GO" id="GO:0097367">
    <property type="term" value="F:carbohydrate derivative binding"/>
    <property type="evidence" value="ECO:0007669"/>
    <property type="project" value="InterPro"/>
</dbReference>
<dbReference type="GO" id="GO:0004347">
    <property type="term" value="F:glucose-6-phosphate isomerase activity"/>
    <property type="evidence" value="ECO:0000318"/>
    <property type="project" value="GO_Central"/>
</dbReference>
<dbReference type="GO" id="GO:0048029">
    <property type="term" value="F:monosaccharide binding"/>
    <property type="evidence" value="ECO:0000318"/>
    <property type="project" value="GO_Central"/>
</dbReference>
<dbReference type="GO" id="GO:0006094">
    <property type="term" value="P:gluconeogenesis"/>
    <property type="evidence" value="ECO:0000318"/>
    <property type="project" value="GO_Central"/>
</dbReference>
<dbReference type="GO" id="GO:0051156">
    <property type="term" value="P:glucose 6-phosphate metabolic process"/>
    <property type="evidence" value="ECO:0000318"/>
    <property type="project" value="GO_Central"/>
</dbReference>
<dbReference type="GO" id="GO:0006096">
    <property type="term" value="P:glycolytic process"/>
    <property type="evidence" value="ECO:0000318"/>
    <property type="project" value="GO_Central"/>
</dbReference>
<dbReference type="CDD" id="cd05015">
    <property type="entry name" value="SIS_PGI_1"/>
    <property type="match status" value="1"/>
</dbReference>
<dbReference type="CDD" id="cd05016">
    <property type="entry name" value="SIS_PGI_2"/>
    <property type="match status" value="1"/>
</dbReference>
<dbReference type="FunFam" id="3.40.50.10490:FF:000015">
    <property type="entry name" value="Glucose-6-phosphate isomerase"/>
    <property type="match status" value="1"/>
</dbReference>
<dbReference type="FunFam" id="3.40.50.10490:FF:000016">
    <property type="entry name" value="Glucose-6-phosphate isomerase"/>
    <property type="match status" value="1"/>
</dbReference>
<dbReference type="Gene3D" id="3.40.50.10490">
    <property type="entry name" value="Glucose-6-phosphate isomerase like protein, domain 1"/>
    <property type="match status" value="2"/>
</dbReference>
<dbReference type="HAMAP" id="MF_00473">
    <property type="entry name" value="G6P_isomerase"/>
    <property type="match status" value="1"/>
</dbReference>
<dbReference type="InterPro" id="IPR001672">
    <property type="entry name" value="G6P_Isomerase"/>
</dbReference>
<dbReference type="InterPro" id="IPR018189">
    <property type="entry name" value="Phosphoglucose_isomerase_CS"/>
</dbReference>
<dbReference type="InterPro" id="IPR046348">
    <property type="entry name" value="SIS_dom_sf"/>
</dbReference>
<dbReference type="InterPro" id="IPR035476">
    <property type="entry name" value="SIS_PGI_1"/>
</dbReference>
<dbReference type="InterPro" id="IPR035482">
    <property type="entry name" value="SIS_PGI_2"/>
</dbReference>
<dbReference type="NCBIfam" id="NF010697">
    <property type="entry name" value="PRK14097.1"/>
    <property type="match status" value="1"/>
</dbReference>
<dbReference type="PANTHER" id="PTHR11469">
    <property type="entry name" value="GLUCOSE-6-PHOSPHATE ISOMERASE"/>
    <property type="match status" value="1"/>
</dbReference>
<dbReference type="PANTHER" id="PTHR11469:SF1">
    <property type="entry name" value="GLUCOSE-6-PHOSPHATE ISOMERASE"/>
    <property type="match status" value="1"/>
</dbReference>
<dbReference type="Pfam" id="PF00342">
    <property type="entry name" value="PGI"/>
    <property type="match status" value="2"/>
</dbReference>
<dbReference type="PRINTS" id="PR00662">
    <property type="entry name" value="G6PISOMERASE"/>
</dbReference>
<dbReference type="SUPFAM" id="SSF53697">
    <property type="entry name" value="SIS domain"/>
    <property type="match status" value="1"/>
</dbReference>
<dbReference type="PROSITE" id="PS00765">
    <property type="entry name" value="P_GLUCOSE_ISOMERASE_1"/>
    <property type="match status" value="1"/>
</dbReference>
<dbReference type="PROSITE" id="PS00174">
    <property type="entry name" value="P_GLUCOSE_ISOMERASE_2"/>
    <property type="match status" value="1"/>
</dbReference>
<dbReference type="PROSITE" id="PS51463">
    <property type="entry name" value="P_GLUCOSE_ISOMERASE_3"/>
    <property type="match status" value="1"/>
</dbReference>
<organism>
    <name type="scientific">Fusobacterium nucleatum subsp. nucleatum (strain ATCC 25586 / DSM 15643 / BCRC 10681 / CIP 101130 / JCM 8532 / KCTC 2640 / LMG 13131 / VPI 4355)</name>
    <dbReference type="NCBI Taxonomy" id="190304"/>
    <lineage>
        <taxon>Bacteria</taxon>
        <taxon>Fusobacteriati</taxon>
        <taxon>Fusobacteriota</taxon>
        <taxon>Fusobacteriia</taxon>
        <taxon>Fusobacteriales</taxon>
        <taxon>Fusobacteriaceae</taxon>
        <taxon>Fusobacterium</taxon>
    </lineage>
</organism>
<protein>
    <recommendedName>
        <fullName evidence="1">Glucose-6-phosphate isomerase</fullName>
        <shortName evidence="1">GPI</shortName>
        <ecNumber evidence="1">5.3.1.9</ecNumber>
    </recommendedName>
    <alternativeName>
        <fullName evidence="1">Phosphoglucose isomerase</fullName>
        <shortName evidence="1">PGI</shortName>
    </alternativeName>
    <alternativeName>
        <fullName evidence="1">Phosphohexose isomerase</fullName>
        <shortName evidence="1">PHI</shortName>
    </alternativeName>
</protein>
<gene>
    <name evidence="1" type="primary">pgi</name>
    <name type="ordered locus">FN2054</name>
</gene>
<comment type="function">
    <text evidence="1">Catalyzes the reversible isomerization of glucose-6-phosphate to fructose-6-phosphate.</text>
</comment>
<comment type="catalytic activity">
    <reaction evidence="1">
        <text>alpha-D-glucose 6-phosphate = beta-D-fructose 6-phosphate</text>
        <dbReference type="Rhea" id="RHEA:11816"/>
        <dbReference type="ChEBI" id="CHEBI:57634"/>
        <dbReference type="ChEBI" id="CHEBI:58225"/>
        <dbReference type="EC" id="5.3.1.9"/>
    </reaction>
</comment>
<comment type="pathway">
    <text evidence="1">Carbohydrate biosynthesis; gluconeogenesis.</text>
</comment>
<comment type="pathway">
    <text evidence="1">Carbohydrate degradation; glycolysis; D-glyceraldehyde 3-phosphate and glycerone phosphate from D-glucose: step 2/4.</text>
</comment>
<comment type="subcellular location">
    <subcellularLocation>
        <location evidence="1">Cytoplasm</location>
    </subcellularLocation>
</comment>
<comment type="similarity">
    <text evidence="1">Belongs to the GPI family.</text>
</comment>
<proteinExistence type="inferred from homology"/>
<reference key="1">
    <citation type="journal article" date="2002" name="J. Bacteriol.">
        <title>Genome sequence and analysis of the oral bacterium Fusobacterium nucleatum strain ATCC 25586.</title>
        <authorList>
            <person name="Kapatral V."/>
            <person name="Anderson I."/>
            <person name="Ivanova N."/>
            <person name="Reznik G."/>
            <person name="Los T."/>
            <person name="Lykidis A."/>
            <person name="Bhattacharyya A."/>
            <person name="Bartman A."/>
            <person name="Gardner W."/>
            <person name="Grechkin G."/>
            <person name="Zhu L."/>
            <person name="Vasieva O."/>
            <person name="Chu L."/>
            <person name="Kogan Y."/>
            <person name="Chaga O."/>
            <person name="Goltsman E."/>
            <person name="Bernal A."/>
            <person name="Larsen N."/>
            <person name="D'Souza M."/>
            <person name="Walunas T."/>
            <person name="Pusch G."/>
            <person name="Haselkorn R."/>
            <person name="Fonstein M."/>
            <person name="Kyrpides N.C."/>
            <person name="Overbeek R."/>
        </authorList>
    </citation>
    <scope>NUCLEOTIDE SEQUENCE [LARGE SCALE GENOMIC DNA]</scope>
    <source>
        <strain>ATCC 25586 / DSM 15643 / BCRC 10681 / CIP 101130 / JCM 8532 / KCTC 2640 / LMG 13131 / VPI 4355</strain>
    </source>
</reference>
<feature type="chain" id="PRO_0000180645" description="Glucose-6-phosphate isomerase">
    <location>
        <begin position="1"/>
        <end position="448"/>
    </location>
</feature>
<feature type="active site" description="Proton donor" evidence="1">
    <location>
        <position position="288"/>
    </location>
</feature>
<feature type="active site" evidence="1">
    <location>
        <position position="309"/>
    </location>
</feature>
<feature type="active site" evidence="1">
    <location>
        <position position="423"/>
    </location>
</feature>
<keyword id="KW-0963">Cytoplasm</keyword>
<keyword id="KW-0312">Gluconeogenesis</keyword>
<keyword id="KW-0324">Glycolysis</keyword>
<keyword id="KW-0413">Isomerase</keyword>
<keyword id="KW-1185">Reference proteome</keyword>